<dbReference type="EC" id="5.3.2.-"/>
<dbReference type="EMBL" id="BX571856">
    <property type="protein sequence ID" value="CAG40374.1"/>
    <property type="status" value="ALT_INIT"/>
    <property type="molecule type" value="Genomic_DNA"/>
</dbReference>
<dbReference type="RefSeq" id="WP_001123276.1">
    <property type="nucleotide sequence ID" value="NC_002952.2"/>
</dbReference>
<dbReference type="PDB" id="2X4K">
    <property type="method" value="X-ray"/>
    <property type="resolution" value="1.10 A"/>
    <property type="chains" value="A/B=1-61"/>
</dbReference>
<dbReference type="PDBsum" id="2X4K"/>
<dbReference type="SMR" id="Q6GH41"/>
<dbReference type="KEGG" id="sar:SAR1376"/>
<dbReference type="HOGENOM" id="CLU_148073_5_1_9"/>
<dbReference type="BRENDA" id="5.3.2.6">
    <property type="organism ID" value="3352"/>
</dbReference>
<dbReference type="EvolutionaryTrace" id="Q6GH41"/>
<dbReference type="Proteomes" id="UP000000596">
    <property type="component" value="Chromosome"/>
</dbReference>
<dbReference type="GO" id="GO:0016853">
    <property type="term" value="F:isomerase activity"/>
    <property type="evidence" value="ECO:0007669"/>
    <property type="project" value="UniProtKB-KW"/>
</dbReference>
<dbReference type="CDD" id="cd00491">
    <property type="entry name" value="4Oxalocrotonate_Tautomerase"/>
    <property type="match status" value="1"/>
</dbReference>
<dbReference type="Gene3D" id="3.30.429.10">
    <property type="entry name" value="Macrophage Migration Inhibitory Factor"/>
    <property type="match status" value="1"/>
</dbReference>
<dbReference type="InterPro" id="IPR018191">
    <property type="entry name" value="4-OT"/>
</dbReference>
<dbReference type="InterPro" id="IPR004370">
    <property type="entry name" value="4-OT-like_dom"/>
</dbReference>
<dbReference type="InterPro" id="IPR014347">
    <property type="entry name" value="Tautomerase/MIF_sf"/>
</dbReference>
<dbReference type="NCBIfam" id="NF002571">
    <property type="entry name" value="PRK02220.1"/>
    <property type="match status" value="1"/>
</dbReference>
<dbReference type="NCBIfam" id="TIGR00013">
    <property type="entry name" value="taut"/>
    <property type="match status" value="1"/>
</dbReference>
<dbReference type="PANTHER" id="PTHR35530:SF1">
    <property type="entry name" value="2-HYDROXYMUCONATE TAUTOMERASE"/>
    <property type="match status" value="1"/>
</dbReference>
<dbReference type="PANTHER" id="PTHR35530">
    <property type="entry name" value="TAUTOMERASE-RELATED"/>
    <property type="match status" value="1"/>
</dbReference>
<dbReference type="Pfam" id="PF01361">
    <property type="entry name" value="Tautomerase"/>
    <property type="match status" value="1"/>
</dbReference>
<dbReference type="SUPFAM" id="SSF55331">
    <property type="entry name" value="Tautomerase/MIF"/>
    <property type="match status" value="1"/>
</dbReference>
<name>Y1376_STAAR</name>
<feature type="initiator methionine" description="Removed" evidence="1">
    <location>
        <position position="1"/>
    </location>
</feature>
<feature type="chain" id="PRO_0000209543" description="Probable tautomerase SAR1376">
    <location>
        <begin position="2"/>
        <end position="61"/>
    </location>
</feature>
<feature type="active site" description="Proton acceptor; via imino nitrogen" evidence="1">
    <location>
        <position position="2"/>
    </location>
</feature>
<feature type="strand" evidence="3">
    <location>
        <begin position="3"/>
        <end position="10"/>
    </location>
</feature>
<feature type="helix" evidence="3">
    <location>
        <begin position="14"/>
        <end position="32"/>
    </location>
</feature>
<feature type="helix" evidence="3">
    <location>
        <begin position="36"/>
        <end position="38"/>
    </location>
</feature>
<feature type="strand" evidence="3">
    <location>
        <begin position="40"/>
        <end position="46"/>
    </location>
</feature>
<feature type="helix" evidence="3">
    <location>
        <begin position="48"/>
        <end position="50"/>
    </location>
</feature>
<protein>
    <recommendedName>
        <fullName>Probable tautomerase SAR1376</fullName>
        <ecNumber>5.3.2.-</ecNumber>
    </recommendedName>
</protein>
<comment type="similarity">
    <text evidence="2">Belongs to the 4-oxalocrotonate tautomerase family.</text>
</comment>
<comment type="sequence caution" evidence="2">
    <conflict type="erroneous initiation">
        <sequence resource="EMBL-CDS" id="CAG40374"/>
    </conflict>
</comment>
<accession>Q6GH41</accession>
<keyword id="KW-0002">3D-structure</keyword>
<keyword id="KW-0413">Isomerase</keyword>
<gene>
    <name type="ordered locus">SAR1376</name>
</gene>
<sequence length="61" mass="6744">MPIVNVKLLEGRSDEQLKNLVSEVTDAVEKTTGANRQAIHVVIEEMKPNHYGVAGVRKSDQ</sequence>
<reference key="1">
    <citation type="journal article" date="2004" name="Proc. Natl. Acad. Sci. U.S.A.">
        <title>Complete genomes of two clinical Staphylococcus aureus strains: evidence for the rapid evolution of virulence and drug resistance.</title>
        <authorList>
            <person name="Holden M.T.G."/>
            <person name="Feil E.J."/>
            <person name="Lindsay J.A."/>
            <person name="Peacock S.J."/>
            <person name="Day N.P.J."/>
            <person name="Enright M.C."/>
            <person name="Foster T.J."/>
            <person name="Moore C.E."/>
            <person name="Hurst L."/>
            <person name="Atkin R."/>
            <person name="Barron A."/>
            <person name="Bason N."/>
            <person name="Bentley S.D."/>
            <person name="Chillingworth C."/>
            <person name="Chillingworth T."/>
            <person name="Churcher C."/>
            <person name="Clark L."/>
            <person name="Corton C."/>
            <person name="Cronin A."/>
            <person name="Doggett J."/>
            <person name="Dowd L."/>
            <person name="Feltwell T."/>
            <person name="Hance Z."/>
            <person name="Harris B."/>
            <person name="Hauser H."/>
            <person name="Holroyd S."/>
            <person name="Jagels K."/>
            <person name="James K.D."/>
            <person name="Lennard N."/>
            <person name="Line A."/>
            <person name="Mayes R."/>
            <person name="Moule S."/>
            <person name="Mungall K."/>
            <person name="Ormond D."/>
            <person name="Quail M.A."/>
            <person name="Rabbinowitsch E."/>
            <person name="Rutherford K.M."/>
            <person name="Sanders M."/>
            <person name="Sharp S."/>
            <person name="Simmonds M."/>
            <person name="Stevens K."/>
            <person name="Whitehead S."/>
            <person name="Barrell B.G."/>
            <person name="Spratt B.G."/>
            <person name="Parkhill J."/>
        </authorList>
    </citation>
    <scope>NUCLEOTIDE SEQUENCE [LARGE SCALE GENOMIC DNA]</scope>
    <source>
        <strain>MRSA252</strain>
    </source>
</reference>
<proteinExistence type="evidence at protein level"/>
<organism>
    <name type="scientific">Staphylococcus aureus (strain MRSA252)</name>
    <dbReference type="NCBI Taxonomy" id="282458"/>
    <lineage>
        <taxon>Bacteria</taxon>
        <taxon>Bacillati</taxon>
        <taxon>Bacillota</taxon>
        <taxon>Bacilli</taxon>
        <taxon>Bacillales</taxon>
        <taxon>Staphylococcaceae</taxon>
        <taxon>Staphylococcus</taxon>
    </lineage>
</organism>
<evidence type="ECO:0000250" key="1"/>
<evidence type="ECO:0000305" key="2"/>
<evidence type="ECO:0007829" key="3">
    <source>
        <dbReference type="PDB" id="2X4K"/>
    </source>
</evidence>